<keyword id="KW-1185">Reference proteome</keyword>
<keyword id="KW-0687">Ribonucleoprotein</keyword>
<keyword id="KW-0689">Ribosomal protein</keyword>
<gene>
    <name evidence="1" type="primary">rpmF</name>
    <name type="ordered locus">MAB_1075</name>
</gene>
<name>RL32_MYCA9</name>
<organism>
    <name type="scientific">Mycobacteroides abscessus (strain ATCC 19977 / DSM 44196 / CCUG 20993 / CIP 104536 / JCM 13569 / NCTC 13031 / TMC 1543 / L948)</name>
    <name type="common">Mycobacterium abscessus</name>
    <dbReference type="NCBI Taxonomy" id="561007"/>
    <lineage>
        <taxon>Bacteria</taxon>
        <taxon>Bacillati</taxon>
        <taxon>Actinomycetota</taxon>
        <taxon>Actinomycetes</taxon>
        <taxon>Mycobacteriales</taxon>
        <taxon>Mycobacteriaceae</taxon>
        <taxon>Mycobacteroides</taxon>
        <taxon>Mycobacteroides abscessus</taxon>
    </lineage>
</organism>
<sequence length="57" mass="6554">MAVPKRRMSRSNTRSRRSQWKATATELVNVTVGGQNHKVPRRLLKAARLGLIDLDRR</sequence>
<evidence type="ECO:0000255" key="1">
    <source>
        <dbReference type="HAMAP-Rule" id="MF_00340"/>
    </source>
</evidence>
<evidence type="ECO:0000256" key="2">
    <source>
        <dbReference type="SAM" id="MobiDB-lite"/>
    </source>
</evidence>
<evidence type="ECO:0000305" key="3"/>
<accession>B1MJK9</accession>
<comment type="similarity">
    <text evidence="1">Belongs to the bacterial ribosomal protein bL32 family.</text>
</comment>
<reference key="1">
    <citation type="journal article" date="2009" name="PLoS ONE">
        <title>Non mycobacterial virulence genes in the genome of the emerging pathogen Mycobacterium abscessus.</title>
        <authorList>
            <person name="Ripoll F."/>
            <person name="Pasek S."/>
            <person name="Schenowitz C."/>
            <person name="Dossat C."/>
            <person name="Barbe V."/>
            <person name="Rottman M."/>
            <person name="Macheras E."/>
            <person name="Heym B."/>
            <person name="Herrmann J.L."/>
            <person name="Daffe M."/>
            <person name="Brosch R."/>
            <person name="Risler J.L."/>
            <person name="Gaillard J.L."/>
        </authorList>
    </citation>
    <scope>NUCLEOTIDE SEQUENCE [LARGE SCALE GENOMIC DNA]</scope>
    <source>
        <strain>ATCC 19977 / DSM 44196 / CCUG 20993 / CIP 104536 / JCM 13569 / NCTC 13031 / TMC 1543 / L948</strain>
    </source>
</reference>
<feature type="chain" id="PRO_1000120146" description="Large ribosomal subunit protein bL32">
    <location>
        <begin position="1"/>
        <end position="57"/>
    </location>
</feature>
<feature type="region of interest" description="Disordered" evidence="2">
    <location>
        <begin position="1"/>
        <end position="21"/>
    </location>
</feature>
<feature type="compositionally biased region" description="Basic residues" evidence="2">
    <location>
        <begin position="1"/>
        <end position="19"/>
    </location>
</feature>
<protein>
    <recommendedName>
        <fullName evidence="1">Large ribosomal subunit protein bL32</fullName>
    </recommendedName>
    <alternativeName>
        <fullName evidence="3">50S ribosomal protein L32</fullName>
    </alternativeName>
</protein>
<dbReference type="EMBL" id="CU458896">
    <property type="protein sequence ID" value="CAM61165.1"/>
    <property type="molecule type" value="Genomic_DNA"/>
</dbReference>
<dbReference type="RefSeq" id="WP_005063395.1">
    <property type="nucleotide sequence ID" value="NZ_MLCG01000004.1"/>
</dbReference>
<dbReference type="SMR" id="B1MJK9"/>
<dbReference type="GeneID" id="93378021"/>
<dbReference type="KEGG" id="mab:MAB_1075"/>
<dbReference type="Proteomes" id="UP000007137">
    <property type="component" value="Chromosome"/>
</dbReference>
<dbReference type="GO" id="GO:0015934">
    <property type="term" value="C:large ribosomal subunit"/>
    <property type="evidence" value="ECO:0007669"/>
    <property type="project" value="InterPro"/>
</dbReference>
<dbReference type="GO" id="GO:0003735">
    <property type="term" value="F:structural constituent of ribosome"/>
    <property type="evidence" value="ECO:0007669"/>
    <property type="project" value="InterPro"/>
</dbReference>
<dbReference type="GO" id="GO:0006412">
    <property type="term" value="P:translation"/>
    <property type="evidence" value="ECO:0007669"/>
    <property type="project" value="UniProtKB-UniRule"/>
</dbReference>
<dbReference type="HAMAP" id="MF_00340">
    <property type="entry name" value="Ribosomal_bL32"/>
    <property type="match status" value="1"/>
</dbReference>
<dbReference type="InterPro" id="IPR002677">
    <property type="entry name" value="Ribosomal_bL32"/>
</dbReference>
<dbReference type="InterPro" id="IPR011332">
    <property type="entry name" value="Ribosomal_zn-bd"/>
</dbReference>
<dbReference type="NCBIfam" id="TIGR01031">
    <property type="entry name" value="rpmF_bact"/>
    <property type="match status" value="1"/>
</dbReference>
<dbReference type="Pfam" id="PF01783">
    <property type="entry name" value="Ribosomal_L32p"/>
    <property type="match status" value="1"/>
</dbReference>
<dbReference type="SUPFAM" id="SSF57829">
    <property type="entry name" value="Zn-binding ribosomal proteins"/>
    <property type="match status" value="1"/>
</dbReference>
<proteinExistence type="inferred from homology"/>